<keyword id="KW-0378">Hydrolase</keyword>
<dbReference type="EC" id="3.5.1.2" evidence="1"/>
<dbReference type="EMBL" id="BA000037">
    <property type="protein sequence ID" value="BAC95646.1"/>
    <property type="status" value="ALT_INIT"/>
    <property type="molecule type" value="Genomic_DNA"/>
</dbReference>
<dbReference type="SMR" id="Q7MHI7"/>
<dbReference type="STRING" id="672.VV93_v1c25880"/>
<dbReference type="KEGG" id="vvy:VV2882"/>
<dbReference type="eggNOG" id="COG2066">
    <property type="taxonomic scope" value="Bacteria"/>
</dbReference>
<dbReference type="HOGENOM" id="CLU_027932_1_1_6"/>
<dbReference type="Proteomes" id="UP000002675">
    <property type="component" value="Chromosome I"/>
</dbReference>
<dbReference type="GO" id="GO:0004359">
    <property type="term" value="F:glutaminase activity"/>
    <property type="evidence" value="ECO:0007669"/>
    <property type="project" value="UniProtKB-UniRule"/>
</dbReference>
<dbReference type="GO" id="GO:0006537">
    <property type="term" value="P:glutamate biosynthetic process"/>
    <property type="evidence" value="ECO:0007669"/>
    <property type="project" value="TreeGrafter"/>
</dbReference>
<dbReference type="GO" id="GO:0006543">
    <property type="term" value="P:glutamine catabolic process"/>
    <property type="evidence" value="ECO:0007669"/>
    <property type="project" value="TreeGrafter"/>
</dbReference>
<dbReference type="FunFam" id="3.40.710.10:FF:000005">
    <property type="entry name" value="Glutaminase"/>
    <property type="match status" value="1"/>
</dbReference>
<dbReference type="Gene3D" id="3.40.710.10">
    <property type="entry name" value="DD-peptidase/beta-lactamase superfamily"/>
    <property type="match status" value="1"/>
</dbReference>
<dbReference type="HAMAP" id="MF_00313">
    <property type="entry name" value="Glutaminase"/>
    <property type="match status" value="1"/>
</dbReference>
<dbReference type="InterPro" id="IPR012338">
    <property type="entry name" value="Beta-lactam/transpept-like"/>
</dbReference>
<dbReference type="InterPro" id="IPR015868">
    <property type="entry name" value="Glutaminase"/>
</dbReference>
<dbReference type="NCBIfam" id="TIGR03814">
    <property type="entry name" value="Gln_ase"/>
    <property type="match status" value="1"/>
</dbReference>
<dbReference type="NCBIfam" id="NF002132">
    <property type="entry name" value="PRK00971.1-1"/>
    <property type="match status" value="1"/>
</dbReference>
<dbReference type="NCBIfam" id="NF002133">
    <property type="entry name" value="PRK00971.1-2"/>
    <property type="match status" value="1"/>
</dbReference>
<dbReference type="PANTHER" id="PTHR12544">
    <property type="entry name" value="GLUTAMINASE"/>
    <property type="match status" value="1"/>
</dbReference>
<dbReference type="PANTHER" id="PTHR12544:SF29">
    <property type="entry name" value="GLUTAMINASE"/>
    <property type="match status" value="1"/>
</dbReference>
<dbReference type="Pfam" id="PF04960">
    <property type="entry name" value="Glutaminase"/>
    <property type="match status" value="1"/>
</dbReference>
<dbReference type="SUPFAM" id="SSF56601">
    <property type="entry name" value="beta-lactamase/transpeptidase-like"/>
    <property type="match status" value="1"/>
</dbReference>
<sequence length="306" mass="33169">MKPTKELLNEILHEVRPLIGRGKVANYIPALARVPAHKLAIAVYTNQGEVIKAGDADEAFSIQSISKALSLTLAMGLYQPDEIWRRVGKEPSGQAFNSLIQLEMEQGIPRNPFINAGAIVVADLLASRLSAPRQRLLEFVRQLSGETHICYDKVVAASEMMHSDRNAAIAYLMRSFGNFENEVIPVLNNYFHACALKMSCVDLAKTFSYLANKGVSVHTDQRVISPVQTKQLNALLATCGLYDGAGEFAYRVGMPGKSGVGGGIIAIVPGEMTIAVWSPELDPSGNSLAGTKALELLSERIGRSIF</sequence>
<proteinExistence type="inferred from homology"/>
<name>GLSA_VIBVY</name>
<accession>Q7MHI7</accession>
<comment type="catalytic activity">
    <reaction evidence="1">
        <text>L-glutamine + H2O = L-glutamate + NH4(+)</text>
        <dbReference type="Rhea" id="RHEA:15889"/>
        <dbReference type="ChEBI" id="CHEBI:15377"/>
        <dbReference type="ChEBI" id="CHEBI:28938"/>
        <dbReference type="ChEBI" id="CHEBI:29985"/>
        <dbReference type="ChEBI" id="CHEBI:58359"/>
        <dbReference type="EC" id="3.5.1.2"/>
    </reaction>
</comment>
<comment type="subunit">
    <text evidence="1">Homotetramer.</text>
</comment>
<comment type="similarity">
    <text evidence="1">Belongs to the glutaminase family.</text>
</comment>
<comment type="sequence caution" evidence="2">
    <conflict type="erroneous initiation">
        <sequence resource="EMBL-CDS" id="BAC95646"/>
    </conflict>
</comment>
<reference key="1">
    <citation type="journal article" date="2003" name="Genome Res.">
        <title>Comparative genome analysis of Vibrio vulnificus, a marine pathogen.</title>
        <authorList>
            <person name="Chen C.-Y."/>
            <person name="Wu K.-M."/>
            <person name="Chang Y.-C."/>
            <person name="Chang C.-H."/>
            <person name="Tsai H.-C."/>
            <person name="Liao T.-L."/>
            <person name="Liu Y.-M."/>
            <person name="Chen H.-J."/>
            <person name="Shen A.B.-T."/>
            <person name="Li J.-C."/>
            <person name="Su T.-L."/>
            <person name="Shao C.-P."/>
            <person name="Lee C.-T."/>
            <person name="Hor L.-I."/>
            <person name="Tsai S.-F."/>
        </authorList>
    </citation>
    <scope>NUCLEOTIDE SEQUENCE [LARGE SCALE GENOMIC DNA]</scope>
    <source>
        <strain>YJ016</strain>
    </source>
</reference>
<protein>
    <recommendedName>
        <fullName evidence="1">Glutaminase</fullName>
        <ecNumber evidence="1">3.5.1.2</ecNumber>
    </recommendedName>
</protein>
<feature type="chain" id="PRO_0000110632" description="Glutaminase">
    <location>
        <begin position="1"/>
        <end position="306"/>
    </location>
</feature>
<feature type="binding site" evidence="1">
    <location>
        <position position="64"/>
    </location>
    <ligand>
        <name>substrate</name>
    </ligand>
</feature>
<feature type="binding site" evidence="1">
    <location>
        <position position="115"/>
    </location>
    <ligand>
        <name>substrate</name>
    </ligand>
</feature>
<feature type="binding site" evidence="1">
    <location>
        <position position="159"/>
    </location>
    <ligand>
        <name>substrate</name>
    </ligand>
</feature>
<feature type="binding site" evidence="1">
    <location>
        <position position="166"/>
    </location>
    <ligand>
        <name>substrate</name>
    </ligand>
</feature>
<feature type="binding site" evidence="1">
    <location>
        <position position="190"/>
    </location>
    <ligand>
        <name>substrate</name>
    </ligand>
</feature>
<feature type="binding site" evidence="1">
    <location>
        <position position="242"/>
    </location>
    <ligand>
        <name>substrate</name>
    </ligand>
</feature>
<feature type="binding site" evidence="1">
    <location>
        <position position="260"/>
    </location>
    <ligand>
        <name>substrate</name>
    </ligand>
</feature>
<gene>
    <name evidence="1" type="primary">glsA</name>
    <name type="ordered locus">VV2882</name>
</gene>
<evidence type="ECO:0000255" key="1">
    <source>
        <dbReference type="HAMAP-Rule" id="MF_00313"/>
    </source>
</evidence>
<evidence type="ECO:0000305" key="2"/>
<organism>
    <name type="scientific">Vibrio vulnificus (strain YJ016)</name>
    <dbReference type="NCBI Taxonomy" id="196600"/>
    <lineage>
        <taxon>Bacteria</taxon>
        <taxon>Pseudomonadati</taxon>
        <taxon>Pseudomonadota</taxon>
        <taxon>Gammaproteobacteria</taxon>
        <taxon>Vibrionales</taxon>
        <taxon>Vibrionaceae</taxon>
        <taxon>Vibrio</taxon>
    </lineage>
</organism>